<gene>
    <name type="ORF">IIV6-127L</name>
</gene>
<protein>
    <recommendedName>
        <fullName>Uncharacterized protein 127L</fullName>
    </recommendedName>
</protein>
<accession>O55739</accession>
<reference key="1">
    <citation type="journal article" date="2001" name="Virology">
        <title>Analysis of the first complete DNA sequence of an invertebrate iridovirus: coding strategy of the genome of Chilo iridescent virus.</title>
        <authorList>
            <person name="Jakob N.J."/>
            <person name="Mueller K."/>
            <person name="Bahr U."/>
            <person name="Darai G."/>
        </authorList>
    </citation>
    <scope>NUCLEOTIDE SEQUENCE [LARGE SCALE GENOMIC DNA]</scope>
</reference>
<reference key="2">
    <citation type="journal article" date="2007" name="Virol. J.">
        <title>Comparative genomic analysis of the family Iridoviridae: re-annotating and defining the core set of iridovirus genes.</title>
        <authorList>
            <person name="Eaton H.E."/>
            <person name="Metcalf J."/>
            <person name="Penny E."/>
            <person name="Tcherepanov V."/>
            <person name="Upton C."/>
            <person name="Brunetti C.R."/>
        </authorList>
    </citation>
    <scope>GENOME REANNOTATION</scope>
</reference>
<sequence>MTDYKHKINAEGEYLPFYGYTSISMLSSNTSSVQVLQNIEQLISQTIIGKYYSPLPHTTYHMTLFNIYCMASSPIPPVQRWTLENEENKIPEKLWLSEDVLKIKHIKALDCLRKLPSHLKITNLEFYYKKGLGVWVTLDEESFNAVTKLRKEFSVIYEHDDANLKLHITFAYLFKELPFKNGTREEKKALKTELLKLVKMLNTLKLWTLTNHNIYLYNSMTNYFPIDFFFSSSLV</sequence>
<keyword id="KW-1185">Reference proteome</keyword>
<organism>
    <name type="scientific">Invertebrate iridescent virus 6</name>
    <name type="common">IIV-6</name>
    <name type="synonym">Chilo iridescent virus</name>
    <dbReference type="NCBI Taxonomy" id="176652"/>
    <lineage>
        <taxon>Viruses</taxon>
        <taxon>Varidnaviria</taxon>
        <taxon>Bamfordvirae</taxon>
        <taxon>Nucleocytoviricota</taxon>
        <taxon>Megaviricetes</taxon>
        <taxon>Pimascovirales</taxon>
        <taxon>Iridoviridae</taxon>
        <taxon>Betairidovirinae</taxon>
        <taxon>Iridovirus</taxon>
    </lineage>
</organism>
<proteinExistence type="predicted"/>
<dbReference type="EMBL" id="AF303741">
    <property type="protein sequence ID" value="AAB94450.1"/>
    <property type="molecule type" value="Genomic_DNA"/>
</dbReference>
<dbReference type="PIR" id="T03076">
    <property type="entry name" value="T03076"/>
</dbReference>
<dbReference type="RefSeq" id="NP_149590.1">
    <property type="nucleotide sequence ID" value="NC_003038.1"/>
</dbReference>
<dbReference type="SMR" id="O55739"/>
<dbReference type="KEGG" id="vg:1733363"/>
<dbReference type="OrthoDB" id="25204at10239"/>
<dbReference type="Proteomes" id="UP000001359">
    <property type="component" value="Genome"/>
</dbReference>
<dbReference type="Gene3D" id="3.90.1140.10">
    <property type="entry name" value="Cyclic phosphodiesterase"/>
    <property type="match status" value="1"/>
</dbReference>
<dbReference type="InterPro" id="IPR015069">
    <property type="entry name" value="2H-PEstase_DUF1868"/>
</dbReference>
<dbReference type="InterPro" id="IPR009097">
    <property type="entry name" value="Cyclic_Pdiesterase"/>
</dbReference>
<dbReference type="Pfam" id="PF08975">
    <property type="entry name" value="2H-phosphodiest"/>
    <property type="match status" value="1"/>
</dbReference>
<dbReference type="SUPFAM" id="SSF55144">
    <property type="entry name" value="LigT-like"/>
    <property type="match status" value="1"/>
</dbReference>
<name>127L_IIV6</name>
<feature type="chain" id="PRO_0000378001" description="Uncharacterized protein 127L">
    <location>
        <begin position="1"/>
        <end position="235"/>
    </location>
</feature>
<organismHost>
    <name type="scientific">Acheta domesticus</name>
    <name type="common">House cricket</name>
    <dbReference type="NCBI Taxonomy" id="6997"/>
</organismHost>
<organismHost>
    <name type="scientific">Chilo suppressalis</name>
    <name type="common">Asiatic rice borer moth</name>
    <dbReference type="NCBI Taxonomy" id="168631"/>
</organismHost>
<organismHost>
    <name type="scientific">Gryllus bimaculatus</name>
    <name type="common">Two-spotted cricket</name>
    <dbReference type="NCBI Taxonomy" id="6999"/>
</organismHost>
<organismHost>
    <name type="scientific">Gryllus campestris</name>
    <dbReference type="NCBI Taxonomy" id="58607"/>
</organismHost>
<organismHost>
    <name type="scientific">Spodoptera frugiperda</name>
    <name type="common">Fall armyworm</name>
    <dbReference type="NCBI Taxonomy" id="7108"/>
</organismHost>